<sequence>MHIVVVSVNHKTADVSLREKLTFSESSIQQALSALINQKSILEGVILSTCNRTEIYAVTDQVHTGRYYVKSFMSEWFDVDIETIKSATDVKVGNEAIHHLFKVITGLDSIVLGETQILGQIRDSFLLAQSEGTTGTVFNKLFKDAITLAKRAHAETDISSKAVSVSYAAVELSKKILGKLENKKILIVGAGEMAELALQNLVGSGATDITVINRTAEKAKSLADQYGGRQVSLQELQCALIESDIVISSTSSQEFIITKPMMQDIMKLRKNKSLVLIDIAVPRDIDPEVNDIDLIFNYDVDDLKGLVDANLAERERAAQVIYTMIDKQVISFVDWINMLGVVPVITALREKALRIQATTMDSIDRKMPNLSERDRKVISKHMKSIINQILKDPISQAKEVSGSENRAEELQFFQEIFNITNEVESIKNNEPEVRRSKNSFVFNPEQ</sequence>
<name>HEM1_MACCJ</name>
<reference key="1">
    <citation type="journal article" date="2009" name="J. Bacteriol.">
        <title>Complete genome sequence of Macrococcus caseolyticus strain JCSCS5402, reflecting the ancestral genome of the human-pathogenic staphylococci.</title>
        <authorList>
            <person name="Baba T."/>
            <person name="Kuwahara-Arai K."/>
            <person name="Uchiyama I."/>
            <person name="Takeuchi F."/>
            <person name="Ito T."/>
            <person name="Hiramatsu K."/>
        </authorList>
    </citation>
    <scope>NUCLEOTIDE SEQUENCE [LARGE SCALE GENOMIC DNA]</scope>
    <source>
        <strain>JCSC5402</strain>
    </source>
</reference>
<organism>
    <name type="scientific">Macrococcus caseolyticus (strain JCSC5402)</name>
    <name type="common">Macrococcoides caseolyticum</name>
    <dbReference type="NCBI Taxonomy" id="458233"/>
    <lineage>
        <taxon>Bacteria</taxon>
        <taxon>Bacillati</taxon>
        <taxon>Bacillota</taxon>
        <taxon>Bacilli</taxon>
        <taxon>Bacillales</taxon>
        <taxon>Staphylococcaceae</taxon>
        <taxon>Macrococcoides</taxon>
    </lineage>
</organism>
<comment type="function">
    <text evidence="1">Catalyzes the NADPH-dependent reduction of glutamyl-tRNA(Glu) to glutamate 1-semialdehyde (GSA).</text>
</comment>
<comment type="catalytic activity">
    <reaction evidence="1">
        <text>(S)-4-amino-5-oxopentanoate + tRNA(Glu) + NADP(+) = L-glutamyl-tRNA(Glu) + NADPH + H(+)</text>
        <dbReference type="Rhea" id="RHEA:12344"/>
        <dbReference type="Rhea" id="RHEA-COMP:9663"/>
        <dbReference type="Rhea" id="RHEA-COMP:9680"/>
        <dbReference type="ChEBI" id="CHEBI:15378"/>
        <dbReference type="ChEBI" id="CHEBI:57501"/>
        <dbReference type="ChEBI" id="CHEBI:57783"/>
        <dbReference type="ChEBI" id="CHEBI:58349"/>
        <dbReference type="ChEBI" id="CHEBI:78442"/>
        <dbReference type="ChEBI" id="CHEBI:78520"/>
        <dbReference type="EC" id="1.2.1.70"/>
    </reaction>
</comment>
<comment type="pathway">
    <text evidence="1">Porphyrin-containing compound metabolism; protoporphyrin-IX biosynthesis; 5-aminolevulinate from L-glutamyl-tRNA(Glu): step 1/2.</text>
</comment>
<comment type="subunit">
    <text evidence="1">Homodimer.</text>
</comment>
<comment type="domain">
    <text evidence="1">Possesses an unusual extended V-shaped dimeric structure with each monomer consisting of three distinct domains arranged along a curved 'spinal' alpha-helix. The N-terminal catalytic domain specifically recognizes the glutamate moiety of the substrate. The second domain is the NADPH-binding domain, and the third C-terminal domain is responsible for dimerization.</text>
</comment>
<comment type="miscellaneous">
    <text evidence="1">During catalysis, the active site Cys acts as a nucleophile attacking the alpha-carbonyl group of tRNA-bound glutamate with the formation of a thioester intermediate between enzyme and glutamate, and the concomitant release of tRNA(Glu). The thioester intermediate is finally reduced by direct hydride transfer from NADPH, to form the product GSA.</text>
</comment>
<comment type="similarity">
    <text evidence="1">Belongs to the glutamyl-tRNA reductase family.</text>
</comment>
<protein>
    <recommendedName>
        <fullName evidence="1">Glutamyl-tRNA reductase</fullName>
        <shortName evidence="1">GluTR</shortName>
        <ecNumber evidence="1">1.2.1.70</ecNumber>
    </recommendedName>
</protein>
<keyword id="KW-0521">NADP</keyword>
<keyword id="KW-0560">Oxidoreductase</keyword>
<keyword id="KW-0627">Porphyrin biosynthesis</keyword>
<keyword id="KW-1185">Reference proteome</keyword>
<dbReference type="EC" id="1.2.1.70" evidence="1"/>
<dbReference type="EMBL" id="AP009484">
    <property type="protein sequence ID" value="BAH18013.1"/>
    <property type="molecule type" value="Genomic_DNA"/>
</dbReference>
<dbReference type="RefSeq" id="WP_012657211.1">
    <property type="nucleotide sequence ID" value="NC_011999.1"/>
</dbReference>
<dbReference type="SMR" id="B9E745"/>
<dbReference type="STRING" id="458233.MCCL_1306"/>
<dbReference type="KEGG" id="mcl:MCCL_1306"/>
<dbReference type="eggNOG" id="COG0373">
    <property type="taxonomic scope" value="Bacteria"/>
</dbReference>
<dbReference type="HOGENOM" id="CLU_035113_2_2_9"/>
<dbReference type="OrthoDB" id="110209at2"/>
<dbReference type="UniPathway" id="UPA00251">
    <property type="reaction ID" value="UER00316"/>
</dbReference>
<dbReference type="Proteomes" id="UP000001383">
    <property type="component" value="Chromosome"/>
</dbReference>
<dbReference type="GO" id="GO:0008883">
    <property type="term" value="F:glutamyl-tRNA reductase activity"/>
    <property type="evidence" value="ECO:0007669"/>
    <property type="project" value="UniProtKB-UniRule"/>
</dbReference>
<dbReference type="GO" id="GO:0050661">
    <property type="term" value="F:NADP binding"/>
    <property type="evidence" value="ECO:0007669"/>
    <property type="project" value="InterPro"/>
</dbReference>
<dbReference type="GO" id="GO:0006782">
    <property type="term" value="P:protoporphyrinogen IX biosynthetic process"/>
    <property type="evidence" value="ECO:0007669"/>
    <property type="project" value="UniProtKB-UniRule"/>
</dbReference>
<dbReference type="CDD" id="cd05213">
    <property type="entry name" value="NAD_bind_Glutamyl_tRNA_reduct"/>
    <property type="match status" value="1"/>
</dbReference>
<dbReference type="FunFam" id="3.30.460.30:FF:000001">
    <property type="entry name" value="Glutamyl-tRNA reductase"/>
    <property type="match status" value="1"/>
</dbReference>
<dbReference type="FunFam" id="3.40.50.720:FF:000031">
    <property type="entry name" value="Glutamyl-tRNA reductase"/>
    <property type="match status" value="1"/>
</dbReference>
<dbReference type="Gene3D" id="3.30.460.30">
    <property type="entry name" value="Glutamyl-tRNA reductase, N-terminal domain"/>
    <property type="match status" value="1"/>
</dbReference>
<dbReference type="Gene3D" id="3.40.50.720">
    <property type="entry name" value="NAD(P)-binding Rossmann-like Domain"/>
    <property type="match status" value="1"/>
</dbReference>
<dbReference type="HAMAP" id="MF_00087">
    <property type="entry name" value="Glu_tRNA_reductase"/>
    <property type="match status" value="1"/>
</dbReference>
<dbReference type="InterPro" id="IPR000343">
    <property type="entry name" value="4pyrrol_synth_GluRdtase"/>
</dbReference>
<dbReference type="InterPro" id="IPR015896">
    <property type="entry name" value="4pyrrol_synth_GluRdtase_dimer"/>
</dbReference>
<dbReference type="InterPro" id="IPR015895">
    <property type="entry name" value="4pyrrol_synth_GluRdtase_N"/>
</dbReference>
<dbReference type="InterPro" id="IPR018214">
    <property type="entry name" value="GluRdtase_CS"/>
</dbReference>
<dbReference type="InterPro" id="IPR036453">
    <property type="entry name" value="GluRdtase_dimer_dom_sf"/>
</dbReference>
<dbReference type="InterPro" id="IPR036343">
    <property type="entry name" value="GluRdtase_N_sf"/>
</dbReference>
<dbReference type="InterPro" id="IPR036291">
    <property type="entry name" value="NAD(P)-bd_dom_sf"/>
</dbReference>
<dbReference type="InterPro" id="IPR006151">
    <property type="entry name" value="Shikm_DH/Glu-tRNA_Rdtase"/>
</dbReference>
<dbReference type="NCBIfam" id="TIGR01035">
    <property type="entry name" value="hemA"/>
    <property type="match status" value="1"/>
</dbReference>
<dbReference type="PANTHER" id="PTHR43120">
    <property type="entry name" value="GLUTAMYL-TRNA REDUCTASE 1, CHLOROPLASTIC"/>
    <property type="match status" value="1"/>
</dbReference>
<dbReference type="PANTHER" id="PTHR43120:SF1">
    <property type="entry name" value="GLUTAMYL-TRNA REDUCTASE 1, CHLOROPLASTIC"/>
    <property type="match status" value="1"/>
</dbReference>
<dbReference type="Pfam" id="PF00745">
    <property type="entry name" value="GlutR_dimer"/>
    <property type="match status" value="1"/>
</dbReference>
<dbReference type="Pfam" id="PF05201">
    <property type="entry name" value="GlutR_N"/>
    <property type="match status" value="1"/>
</dbReference>
<dbReference type="Pfam" id="PF01488">
    <property type="entry name" value="Shikimate_DH"/>
    <property type="match status" value="1"/>
</dbReference>
<dbReference type="PIRSF" id="PIRSF000445">
    <property type="entry name" value="4pyrrol_synth_GluRdtase"/>
    <property type="match status" value="1"/>
</dbReference>
<dbReference type="SUPFAM" id="SSF69742">
    <property type="entry name" value="Glutamyl tRNA-reductase catalytic, N-terminal domain"/>
    <property type="match status" value="1"/>
</dbReference>
<dbReference type="SUPFAM" id="SSF69075">
    <property type="entry name" value="Glutamyl tRNA-reductase dimerization domain"/>
    <property type="match status" value="1"/>
</dbReference>
<dbReference type="SUPFAM" id="SSF51735">
    <property type="entry name" value="NAD(P)-binding Rossmann-fold domains"/>
    <property type="match status" value="1"/>
</dbReference>
<dbReference type="PROSITE" id="PS00747">
    <property type="entry name" value="GLUTR"/>
    <property type="match status" value="1"/>
</dbReference>
<proteinExistence type="inferred from homology"/>
<feature type="chain" id="PRO_1000190534" description="Glutamyl-tRNA reductase">
    <location>
        <begin position="1"/>
        <end position="446"/>
    </location>
</feature>
<feature type="active site" description="Nucleophile" evidence="1">
    <location>
        <position position="50"/>
    </location>
</feature>
<feature type="binding site" evidence="1">
    <location>
        <begin position="49"/>
        <end position="52"/>
    </location>
    <ligand>
        <name>substrate</name>
    </ligand>
</feature>
<feature type="binding site" evidence="1">
    <location>
        <position position="109"/>
    </location>
    <ligand>
        <name>substrate</name>
    </ligand>
</feature>
<feature type="binding site" evidence="1">
    <location>
        <begin position="114"/>
        <end position="116"/>
    </location>
    <ligand>
        <name>substrate</name>
    </ligand>
</feature>
<feature type="binding site" evidence="1">
    <location>
        <position position="120"/>
    </location>
    <ligand>
        <name>substrate</name>
    </ligand>
</feature>
<feature type="binding site" evidence="1">
    <location>
        <begin position="189"/>
        <end position="194"/>
    </location>
    <ligand>
        <name>NADP(+)</name>
        <dbReference type="ChEBI" id="CHEBI:58349"/>
    </ligand>
</feature>
<feature type="site" description="Important for activity" evidence="1">
    <location>
        <position position="99"/>
    </location>
</feature>
<gene>
    <name evidence="1" type="primary">hemA</name>
    <name type="ordered locus">MCCL_1306</name>
</gene>
<accession>B9E745</accession>
<evidence type="ECO:0000255" key="1">
    <source>
        <dbReference type="HAMAP-Rule" id="MF_00087"/>
    </source>
</evidence>